<evidence type="ECO:0000255" key="1">
    <source>
        <dbReference type="PROSITE-ProRule" id="PRU00238"/>
    </source>
</evidence>
<protein>
    <recommendedName>
        <fullName>Hemoglobin subunit alpha-1</fullName>
    </recommendedName>
    <alternativeName>
        <fullName>Alpha-1-globin</fullName>
    </alternativeName>
    <alternativeName>
        <fullName>Hemoglobin alpha-1 chain</fullName>
    </alternativeName>
</protein>
<accession>P18979</accession>
<dbReference type="PIR" id="A05300">
    <property type="entry name" value="A05300"/>
</dbReference>
<dbReference type="GO" id="GO:0072562">
    <property type="term" value="C:blood microparticle"/>
    <property type="evidence" value="ECO:0007669"/>
    <property type="project" value="TreeGrafter"/>
</dbReference>
<dbReference type="GO" id="GO:0031838">
    <property type="term" value="C:haptoglobin-hemoglobin complex"/>
    <property type="evidence" value="ECO:0007669"/>
    <property type="project" value="TreeGrafter"/>
</dbReference>
<dbReference type="GO" id="GO:0005833">
    <property type="term" value="C:hemoglobin complex"/>
    <property type="evidence" value="ECO:0007669"/>
    <property type="project" value="InterPro"/>
</dbReference>
<dbReference type="GO" id="GO:0031720">
    <property type="term" value="F:haptoglobin binding"/>
    <property type="evidence" value="ECO:0007669"/>
    <property type="project" value="TreeGrafter"/>
</dbReference>
<dbReference type="GO" id="GO:0020037">
    <property type="term" value="F:heme binding"/>
    <property type="evidence" value="ECO:0007669"/>
    <property type="project" value="InterPro"/>
</dbReference>
<dbReference type="GO" id="GO:0005506">
    <property type="term" value="F:iron ion binding"/>
    <property type="evidence" value="ECO:0007669"/>
    <property type="project" value="InterPro"/>
</dbReference>
<dbReference type="GO" id="GO:0043177">
    <property type="term" value="F:organic acid binding"/>
    <property type="evidence" value="ECO:0007669"/>
    <property type="project" value="TreeGrafter"/>
</dbReference>
<dbReference type="GO" id="GO:0019825">
    <property type="term" value="F:oxygen binding"/>
    <property type="evidence" value="ECO:0007669"/>
    <property type="project" value="InterPro"/>
</dbReference>
<dbReference type="GO" id="GO:0005344">
    <property type="term" value="F:oxygen carrier activity"/>
    <property type="evidence" value="ECO:0007669"/>
    <property type="project" value="UniProtKB-KW"/>
</dbReference>
<dbReference type="GO" id="GO:0004601">
    <property type="term" value="F:peroxidase activity"/>
    <property type="evidence" value="ECO:0007669"/>
    <property type="project" value="TreeGrafter"/>
</dbReference>
<dbReference type="GO" id="GO:0042744">
    <property type="term" value="P:hydrogen peroxide catabolic process"/>
    <property type="evidence" value="ECO:0007669"/>
    <property type="project" value="TreeGrafter"/>
</dbReference>
<dbReference type="Gene3D" id="1.10.490.10">
    <property type="entry name" value="Globins"/>
    <property type="match status" value="1"/>
</dbReference>
<dbReference type="InterPro" id="IPR000971">
    <property type="entry name" value="Globin"/>
</dbReference>
<dbReference type="InterPro" id="IPR009050">
    <property type="entry name" value="Globin-like_sf"/>
</dbReference>
<dbReference type="InterPro" id="IPR012292">
    <property type="entry name" value="Globin/Proto"/>
</dbReference>
<dbReference type="InterPro" id="IPR002338">
    <property type="entry name" value="Hemoglobin_a-typ"/>
</dbReference>
<dbReference type="InterPro" id="IPR050056">
    <property type="entry name" value="Hemoglobin_oxygen_transport"/>
</dbReference>
<dbReference type="InterPro" id="IPR002339">
    <property type="entry name" value="Hemoglobin_pi"/>
</dbReference>
<dbReference type="PANTHER" id="PTHR11442">
    <property type="entry name" value="HEMOGLOBIN FAMILY MEMBER"/>
    <property type="match status" value="1"/>
</dbReference>
<dbReference type="PANTHER" id="PTHR11442:SF48">
    <property type="entry name" value="HEMOGLOBIN SUBUNIT ALPHA"/>
    <property type="match status" value="1"/>
</dbReference>
<dbReference type="Pfam" id="PF00042">
    <property type="entry name" value="Globin"/>
    <property type="match status" value="1"/>
</dbReference>
<dbReference type="PRINTS" id="PR00612">
    <property type="entry name" value="ALPHAHAEM"/>
</dbReference>
<dbReference type="PRINTS" id="PR00815">
    <property type="entry name" value="PIHAEM"/>
</dbReference>
<dbReference type="SUPFAM" id="SSF46458">
    <property type="entry name" value="Globin-like"/>
    <property type="match status" value="1"/>
</dbReference>
<dbReference type="PROSITE" id="PS01033">
    <property type="entry name" value="GLOBIN"/>
    <property type="match status" value="1"/>
</dbReference>
<proteinExistence type="evidence at protein level"/>
<keyword id="KW-0903">Direct protein sequencing</keyword>
<keyword id="KW-0349">Heme</keyword>
<keyword id="KW-0408">Iron</keyword>
<keyword id="KW-0479">Metal-binding</keyword>
<keyword id="KW-0561">Oxygen transport</keyword>
<keyword id="KW-0813">Transport</keyword>
<name>HBA1_SAAHA</name>
<organism>
    <name type="scientific">Saara hardwickii</name>
    <name type="common">Indian spiny-tailed lizard</name>
    <name type="synonym">Uromastyx hardwickii</name>
    <dbReference type="NCBI Taxonomy" id="40250"/>
    <lineage>
        <taxon>Eukaryota</taxon>
        <taxon>Metazoa</taxon>
        <taxon>Chordata</taxon>
        <taxon>Craniata</taxon>
        <taxon>Vertebrata</taxon>
        <taxon>Euteleostomi</taxon>
        <taxon>Lepidosauria</taxon>
        <taxon>Squamata</taxon>
        <taxon>Bifurcata</taxon>
        <taxon>Unidentata</taxon>
        <taxon>Episquamata</taxon>
        <taxon>Toxicofera</taxon>
        <taxon>Iguania</taxon>
        <taxon>Acrodonta</taxon>
        <taxon>Agamidae</taxon>
        <taxon>Uromastycinae</taxon>
        <taxon>Saara</taxon>
    </lineage>
</organism>
<reference key="1">
    <citation type="journal article" date="1983" name="FEBS Lett.">
        <title>Characterization of hemoglobin from the lizard Uromastix hardwickii.</title>
        <authorList>
            <person name="Naqvi S."/>
            <person name="Zaidi Z.H."/>
            <person name="von Bahr-Lindstroem H."/>
            <person name="Carlquist M."/>
            <person name="Joernvall H."/>
        </authorList>
    </citation>
    <scope>PROTEIN SEQUENCE</scope>
</reference>
<sequence>VLTDDDKNHVRAIWGHVSNNPEAFGAEALYRLFTAHPASKTYFSHFDLHENSAQIRXXXXKVVDALTQAVNNLDDLSGAISKLSDLHAEK</sequence>
<comment type="function">
    <text>Involved in oxygen transport from the lung to the various peripheral tissues.</text>
</comment>
<comment type="subunit">
    <text>Heterotetramer of two alpha chains and two beta chains.</text>
</comment>
<comment type="tissue specificity">
    <text>Red blood cells.</text>
</comment>
<comment type="similarity">
    <text evidence="1">Belongs to the globin family.</text>
</comment>
<feature type="chain" id="PRO_0000052796" description="Hemoglobin subunit alpha-1">
    <location>
        <begin position="1"/>
        <end position="90" status="greater than"/>
    </location>
</feature>
<feature type="domain" description="Globin" evidence="1">
    <location>
        <begin position="1"/>
        <end position="90"/>
    </location>
</feature>
<feature type="non-terminal residue">
    <location>
        <position position="90"/>
    </location>
</feature>